<gene>
    <name evidence="1" type="primary">lipB</name>
    <name type="ordered locus">DR_0764</name>
</gene>
<dbReference type="EC" id="2.3.1.181" evidence="1"/>
<dbReference type="EMBL" id="AE000513">
    <property type="protein sequence ID" value="AAF10340.1"/>
    <property type="molecule type" value="Genomic_DNA"/>
</dbReference>
<dbReference type="PIR" id="H75479">
    <property type="entry name" value="H75479"/>
</dbReference>
<dbReference type="RefSeq" id="NP_294488.1">
    <property type="nucleotide sequence ID" value="NC_001263.1"/>
</dbReference>
<dbReference type="SMR" id="Q9RWA5"/>
<dbReference type="STRING" id="243230.DR_0764"/>
<dbReference type="PaxDb" id="243230-DR_0764"/>
<dbReference type="EnsemblBacteria" id="AAF10340">
    <property type="protein sequence ID" value="AAF10340"/>
    <property type="gene ID" value="DR_0764"/>
</dbReference>
<dbReference type="KEGG" id="dra:DR_0764"/>
<dbReference type="PATRIC" id="fig|243230.17.peg.944"/>
<dbReference type="eggNOG" id="COG0321">
    <property type="taxonomic scope" value="Bacteria"/>
</dbReference>
<dbReference type="HOGENOM" id="CLU_035168_1_1_0"/>
<dbReference type="InParanoid" id="Q9RWA5"/>
<dbReference type="OrthoDB" id="9787061at2"/>
<dbReference type="UniPathway" id="UPA00538">
    <property type="reaction ID" value="UER00592"/>
</dbReference>
<dbReference type="Proteomes" id="UP000002524">
    <property type="component" value="Chromosome 1"/>
</dbReference>
<dbReference type="GO" id="GO:0005737">
    <property type="term" value="C:cytoplasm"/>
    <property type="evidence" value="ECO:0007669"/>
    <property type="project" value="UniProtKB-SubCell"/>
</dbReference>
<dbReference type="GO" id="GO:0033819">
    <property type="term" value="F:lipoyl(octanoyl) transferase activity"/>
    <property type="evidence" value="ECO:0000318"/>
    <property type="project" value="GO_Central"/>
</dbReference>
<dbReference type="GO" id="GO:0036211">
    <property type="term" value="P:protein modification process"/>
    <property type="evidence" value="ECO:0007669"/>
    <property type="project" value="InterPro"/>
</dbReference>
<dbReference type="CDD" id="cd16444">
    <property type="entry name" value="LipB"/>
    <property type="match status" value="1"/>
</dbReference>
<dbReference type="FunFam" id="3.30.930.10:FF:000189">
    <property type="entry name" value="Octanoyltransferase"/>
    <property type="match status" value="1"/>
</dbReference>
<dbReference type="Gene3D" id="3.30.930.10">
    <property type="entry name" value="Bira Bifunctional Protein, Domain 2"/>
    <property type="match status" value="1"/>
</dbReference>
<dbReference type="HAMAP" id="MF_00013">
    <property type="entry name" value="LipB"/>
    <property type="match status" value="1"/>
</dbReference>
<dbReference type="InterPro" id="IPR045864">
    <property type="entry name" value="aa-tRNA-synth_II/BPL/LPL"/>
</dbReference>
<dbReference type="InterPro" id="IPR004143">
    <property type="entry name" value="BPL_LPL_catalytic"/>
</dbReference>
<dbReference type="InterPro" id="IPR000544">
    <property type="entry name" value="Octanoyltransferase"/>
</dbReference>
<dbReference type="InterPro" id="IPR020605">
    <property type="entry name" value="Octanoyltransferase_CS"/>
</dbReference>
<dbReference type="NCBIfam" id="TIGR00214">
    <property type="entry name" value="lipB"/>
    <property type="match status" value="1"/>
</dbReference>
<dbReference type="PANTHER" id="PTHR10993:SF7">
    <property type="entry name" value="LIPOYLTRANSFERASE 2, MITOCHONDRIAL-RELATED"/>
    <property type="match status" value="1"/>
</dbReference>
<dbReference type="PANTHER" id="PTHR10993">
    <property type="entry name" value="OCTANOYLTRANSFERASE"/>
    <property type="match status" value="1"/>
</dbReference>
<dbReference type="Pfam" id="PF21948">
    <property type="entry name" value="LplA-B_cat"/>
    <property type="match status" value="1"/>
</dbReference>
<dbReference type="SUPFAM" id="SSF55681">
    <property type="entry name" value="Class II aaRS and biotin synthetases"/>
    <property type="match status" value="1"/>
</dbReference>
<dbReference type="PROSITE" id="PS51733">
    <property type="entry name" value="BPL_LPL_CATALYTIC"/>
    <property type="match status" value="1"/>
</dbReference>
<dbReference type="PROSITE" id="PS01313">
    <property type="entry name" value="LIPB"/>
    <property type="match status" value="1"/>
</dbReference>
<feature type="chain" id="PRO_0000062831" description="Octanoyltransferase">
    <location>
        <begin position="1"/>
        <end position="336"/>
    </location>
</feature>
<feature type="domain" description="BPL/LPL catalytic" evidence="2">
    <location>
        <begin position="124"/>
        <end position="318"/>
    </location>
</feature>
<feature type="region of interest" description="Unknown">
    <location>
        <begin position="1"/>
        <end position="92"/>
    </location>
</feature>
<feature type="region of interest" description="Disordered" evidence="3">
    <location>
        <begin position="1"/>
        <end position="22"/>
    </location>
</feature>
<feature type="region of interest" description="Disordered" evidence="3">
    <location>
        <begin position="48"/>
        <end position="88"/>
    </location>
</feature>
<feature type="region of interest" description="LipB domain">
    <location>
        <begin position="93"/>
        <end position="336"/>
    </location>
</feature>
<feature type="compositionally biased region" description="Polar residues" evidence="3">
    <location>
        <begin position="1"/>
        <end position="16"/>
    </location>
</feature>
<feature type="active site" description="Acyl-thioester intermediate" evidence="1">
    <location>
        <position position="275"/>
    </location>
</feature>
<feature type="binding site" evidence="1">
    <location>
        <begin position="170"/>
        <end position="177"/>
    </location>
    <ligand>
        <name>substrate</name>
    </ligand>
</feature>
<feature type="binding site" evidence="1">
    <location>
        <begin position="244"/>
        <end position="246"/>
    </location>
    <ligand>
        <name>substrate</name>
    </ligand>
</feature>
<feature type="binding site" evidence="1">
    <location>
        <begin position="257"/>
        <end position="259"/>
    </location>
    <ligand>
        <name>substrate</name>
    </ligand>
</feature>
<feature type="site" description="Lowers pKa of active site Cys" evidence="1">
    <location>
        <position position="241"/>
    </location>
</feature>
<protein>
    <recommendedName>
        <fullName evidence="1">Octanoyltransferase</fullName>
        <ecNumber evidence="1">2.3.1.181</ecNumber>
    </recommendedName>
    <alternativeName>
        <fullName evidence="1">Lipoate-protein ligase B</fullName>
    </alternativeName>
    <alternativeName>
        <fullName evidence="1">Lipoyl/octanoyl transferase</fullName>
    </alternativeName>
    <alternativeName>
        <fullName evidence="1">Octanoyl-[acyl-carrier-protein]-protein N-octanoyltransferase</fullName>
    </alternativeName>
</protein>
<keyword id="KW-0012">Acyltransferase</keyword>
<keyword id="KW-0963">Cytoplasm</keyword>
<keyword id="KW-1185">Reference proteome</keyword>
<keyword id="KW-0808">Transferase</keyword>
<accession>Q9RWA5</accession>
<evidence type="ECO:0000255" key="1">
    <source>
        <dbReference type="HAMAP-Rule" id="MF_00013"/>
    </source>
</evidence>
<evidence type="ECO:0000255" key="2">
    <source>
        <dbReference type="PROSITE-ProRule" id="PRU01067"/>
    </source>
</evidence>
<evidence type="ECO:0000256" key="3">
    <source>
        <dbReference type="SAM" id="MobiDB-lite"/>
    </source>
</evidence>
<evidence type="ECO:0000305" key="4"/>
<comment type="function">
    <text evidence="1">Catalyzes the transfer of endogenously produced octanoic acid from octanoyl-acyl-carrier-protein onto the lipoyl domains of lipoate-dependent enzymes. Lipoyl-ACP can also act as a substrate although octanoyl-ACP is likely to be the physiological substrate.</text>
</comment>
<comment type="catalytic activity">
    <reaction evidence="1">
        <text>octanoyl-[ACP] + L-lysyl-[protein] = N(6)-octanoyl-L-lysyl-[protein] + holo-[ACP] + H(+)</text>
        <dbReference type="Rhea" id="RHEA:17665"/>
        <dbReference type="Rhea" id="RHEA-COMP:9636"/>
        <dbReference type="Rhea" id="RHEA-COMP:9685"/>
        <dbReference type="Rhea" id="RHEA-COMP:9752"/>
        <dbReference type="Rhea" id="RHEA-COMP:9928"/>
        <dbReference type="ChEBI" id="CHEBI:15378"/>
        <dbReference type="ChEBI" id="CHEBI:29969"/>
        <dbReference type="ChEBI" id="CHEBI:64479"/>
        <dbReference type="ChEBI" id="CHEBI:78463"/>
        <dbReference type="ChEBI" id="CHEBI:78809"/>
        <dbReference type="EC" id="2.3.1.181"/>
    </reaction>
</comment>
<comment type="pathway">
    <text evidence="1">Protein modification; protein lipoylation via endogenous pathway; protein N(6)-(lipoyl)lysine from octanoyl-[acyl-carrier-protein]: step 1/2.</text>
</comment>
<comment type="subcellular location">
    <subcellularLocation>
        <location evidence="1">Cytoplasm</location>
    </subcellularLocation>
</comment>
<comment type="miscellaneous">
    <text evidence="1">In the reaction, the free carboxyl group of octanoic acid is attached via an amide linkage to the epsilon-amino group of a specific lysine residue of lipoyl domains of lipoate-dependent enzymes.</text>
</comment>
<comment type="similarity">
    <text evidence="4">In the C-terminal section; belongs to the LipB family.</text>
</comment>
<reference key="1">
    <citation type="journal article" date="1999" name="Science">
        <title>Genome sequence of the radioresistant bacterium Deinococcus radiodurans R1.</title>
        <authorList>
            <person name="White O."/>
            <person name="Eisen J.A."/>
            <person name="Heidelberg J.F."/>
            <person name="Hickey E.K."/>
            <person name="Peterson J.D."/>
            <person name="Dodson R.J."/>
            <person name="Haft D.H."/>
            <person name="Gwinn M.L."/>
            <person name="Nelson W.C."/>
            <person name="Richardson D.L."/>
            <person name="Moffat K.S."/>
            <person name="Qin H."/>
            <person name="Jiang L."/>
            <person name="Pamphile W."/>
            <person name="Crosby M."/>
            <person name="Shen M."/>
            <person name="Vamathevan J.J."/>
            <person name="Lam P."/>
            <person name="McDonald L.A."/>
            <person name="Utterback T.R."/>
            <person name="Zalewski C."/>
            <person name="Makarova K.S."/>
            <person name="Aravind L."/>
            <person name="Daly M.J."/>
            <person name="Minton K.W."/>
            <person name="Fleischmann R.D."/>
            <person name="Ketchum K.A."/>
            <person name="Nelson K.E."/>
            <person name="Salzberg S.L."/>
            <person name="Smith H.O."/>
            <person name="Venter J.C."/>
            <person name="Fraser C.M."/>
        </authorList>
    </citation>
    <scope>NUCLEOTIDE SEQUENCE [LARGE SCALE GENOMIC DNA]</scope>
    <source>
        <strain>ATCC 13939 / DSM 20539 / JCM 16871 / CCUG 27074 / LMG 4051 / NBRC 15346 / NCIMB 9279 / VKM B-1422 / R1</strain>
    </source>
</reference>
<name>LIPB_DEIRA</name>
<proteinExistence type="inferred from homology"/>
<organism>
    <name type="scientific">Deinococcus radiodurans (strain ATCC 13939 / DSM 20539 / JCM 16871 / CCUG 27074 / LMG 4051 / NBRC 15346 / NCIMB 9279 / VKM B-1422 / R1)</name>
    <dbReference type="NCBI Taxonomy" id="243230"/>
    <lineage>
        <taxon>Bacteria</taxon>
        <taxon>Thermotogati</taxon>
        <taxon>Deinococcota</taxon>
        <taxon>Deinococci</taxon>
        <taxon>Deinococcales</taxon>
        <taxon>Deinococcaceae</taxon>
        <taxon>Deinococcus</taxon>
    </lineage>
</organism>
<sequence length="336" mass="36178">MPKSALMSSSFQTSVSPRPLPVSCASRTAARKLSLYCSEGRTRCGMGQGKGWRWPGHRPPGLPSPTNRVGQSVPKWRPQPHKAAGGGRTIRDVKEAAFDVLDLGLLPYPQAWARQKQELARVAVGGRPTLLLVEHPAVLTLGRKAQEGENIVVTREYLAAQGIDVFAVERGGDVTYHGPGQLVAYAIFPVGRRVRDFLRLLENAVVTALGTLGLPDARPNPGYAGVYVDPREINGKTYDQKICSIGVAIKQNVALHGIGLNVCTNLDHFDLIVPCGLTDTQMTSVQREYDLRGLGSVSMEQAKKALTDAFALTFADYDWSLPGVAAGQEALSVASP</sequence>